<sequence length="171" mass="19065">MEPSPALAWLLLLSLVADCLKAAQSRDFTVKDIIYLHPSTTPYPGGFKCFTCEKAADNYECNRWAPDIYCPRDTRYCYTQHTMEVTGNSISVTKRCVPLEECLSTGCRDSEHEGYKICTSCCEGNICNLPLPRNETDATFATTSPINQTNGHPHCVSVIVSCLWVWLGLTL</sequence>
<feature type="signal peptide" evidence="4">
    <location>
        <begin position="1"/>
        <end position="25"/>
    </location>
</feature>
<feature type="chain" id="PRO_0000036179" description="Ly6/PLAUR domain-containing protein 6" evidence="4">
    <location>
        <begin position="26"/>
        <end position="147"/>
    </location>
</feature>
<feature type="propeptide" id="PRO_0000457042" description="Removed in mature form" evidence="4">
    <location>
        <begin position="148"/>
        <end position="171"/>
    </location>
</feature>
<feature type="domain" description="UPAR/Ly6">
    <location>
        <begin position="47"/>
        <end position="141"/>
    </location>
</feature>
<feature type="short sequence motif" description="NxI motif" evidence="3">
    <location>
        <begin position="88"/>
        <end position="90"/>
    </location>
</feature>
<feature type="lipid moiety-binding region" description="GPI-anchor amidated asparagine" evidence="4">
    <location>
        <position position="147"/>
    </location>
</feature>
<feature type="glycosylation site" description="N-linked (GlcNAc...) asparagine" evidence="5">
    <location>
        <position position="134"/>
    </location>
</feature>
<feature type="glycosylation site" description="N-linked (GlcNAc...) asparagine" evidence="5">
    <location>
        <position position="147"/>
    </location>
</feature>
<feature type="disulfide bond" evidence="3">
    <location>
        <begin position="49"/>
        <end position="77"/>
    </location>
</feature>
<feature type="disulfide bond" evidence="3">
    <location>
        <begin position="52"/>
        <end position="61"/>
    </location>
</feature>
<feature type="disulfide bond" evidence="3">
    <location>
        <begin position="70"/>
        <end position="96"/>
    </location>
</feature>
<feature type="disulfide bond" evidence="3">
    <location>
        <begin position="102"/>
        <end position="121"/>
    </location>
</feature>
<feature type="disulfide bond" evidence="3">
    <location>
        <begin position="107"/>
        <end position="118"/>
    </location>
</feature>
<feature type="disulfide bond" evidence="3">
    <location>
        <begin position="122"/>
        <end position="127"/>
    </location>
</feature>
<protein>
    <recommendedName>
        <fullName>Ly6/PLAUR domain-containing protein 6</fullName>
    </recommendedName>
</protein>
<dbReference type="EMBL" id="AK053620">
    <property type="protein sequence ID" value="BAC35449.1"/>
    <property type="molecule type" value="mRNA"/>
</dbReference>
<dbReference type="EMBL" id="BC070462">
    <property type="protein sequence ID" value="AAH70462.1"/>
    <property type="molecule type" value="mRNA"/>
</dbReference>
<dbReference type="CCDS" id="CCDS16026.1"/>
<dbReference type="RefSeq" id="NP_001406609.1">
    <property type="nucleotide sequence ID" value="NM_001419680.1"/>
</dbReference>
<dbReference type="RefSeq" id="NP_796113.1">
    <property type="nucleotide sequence ID" value="NM_177139.6"/>
</dbReference>
<dbReference type="RefSeq" id="XP_011237418.1">
    <property type="nucleotide sequence ID" value="XM_011239116.4"/>
</dbReference>
<dbReference type="SMR" id="Q8BPP5"/>
<dbReference type="FunCoup" id="Q8BPP5">
    <property type="interactions" value="409"/>
</dbReference>
<dbReference type="STRING" id="10090.ENSMUSP00000061578"/>
<dbReference type="GlyCosmos" id="Q8BPP5">
    <property type="glycosylation" value="2 sites, No reported glycans"/>
</dbReference>
<dbReference type="GlyGen" id="Q8BPP5">
    <property type="glycosylation" value="2 sites"/>
</dbReference>
<dbReference type="PhosphoSitePlus" id="Q8BPP5"/>
<dbReference type="PaxDb" id="10090-ENSMUSP00000061578"/>
<dbReference type="ProteomicsDB" id="252692"/>
<dbReference type="Antibodypedia" id="33640">
    <property type="antibodies" value="65 antibodies from 14 providers"/>
</dbReference>
<dbReference type="Ensembl" id="ENSMUST00000053208.14">
    <property type="protein sequence ID" value="ENSMUSP00000061578.8"/>
    <property type="gene ID" value="ENSMUSG00000050447.16"/>
</dbReference>
<dbReference type="Ensembl" id="ENSMUST00000112712.10">
    <property type="protein sequence ID" value="ENSMUSP00000108332.4"/>
    <property type="gene ID" value="ENSMUSG00000050447.16"/>
</dbReference>
<dbReference type="Ensembl" id="ENSMUST00000169232.2">
    <property type="protein sequence ID" value="ENSMUSP00000131002.2"/>
    <property type="gene ID" value="ENSMUSG00000050447.16"/>
</dbReference>
<dbReference type="GeneID" id="320343"/>
<dbReference type="KEGG" id="mmu:320343"/>
<dbReference type="UCSC" id="uc008jqa.3">
    <property type="organism name" value="mouse"/>
</dbReference>
<dbReference type="AGR" id="MGI:2443848"/>
<dbReference type="CTD" id="130574"/>
<dbReference type="MGI" id="MGI:2443848">
    <property type="gene designation" value="Lypd6"/>
</dbReference>
<dbReference type="VEuPathDB" id="HostDB:ENSMUSG00000050447"/>
<dbReference type="eggNOG" id="ENOG502RYB5">
    <property type="taxonomic scope" value="Eukaryota"/>
</dbReference>
<dbReference type="GeneTree" id="ENSGT00390000000220"/>
<dbReference type="InParanoid" id="Q8BPP5"/>
<dbReference type="OMA" id="AWPTVAW"/>
<dbReference type="OrthoDB" id="6149028at2759"/>
<dbReference type="PhylomeDB" id="Q8BPP5"/>
<dbReference type="TreeFam" id="TF332443"/>
<dbReference type="BioGRID-ORCS" id="320343">
    <property type="hits" value="3 hits in 76 CRISPR screens"/>
</dbReference>
<dbReference type="ChiTaRS" id="Lypd6">
    <property type="organism name" value="mouse"/>
</dbReference>
<dbReference type="PRO" id="PR:Q8BPP5"/>
<dbReference type="Proteomes" id="UP000000589">
    <property type="component" value="Chromosome 2"/>
</dbReference>
<dbReference type="RNAct" id="Q8BPP5">
    <property type="molecule type" value="protein"/>
</dbReference>
<dbReference type="Bgee" id="ENSMUSG00000050447">
    <property type="expression patterns" value="Expressed in renal medulla collecting duct and 190 other cell types or tissues"/>
</dbReference>
<dbReference type="ExpressionAtlas" id="Q8BPP5">
    <property type="expression patterns" value="baseline and differential"/>
</dbReference>
<dbReference type="GO" id="GO:0005737">
    <property type="term" value="C:cytoplasm"/>
    <property type="evidence" value="ECO:0007669"/>
    <property type="project" value="UniProtKB-SubCell"/>
</dbReference>
<dbReference type="GO" id="GO:0030425">
    <property type="term" value="C:dendrite"/>
    <property type="evidence" value="ECO:0007669"/>
    <property type="project" value="UniProtKB-SubCell"/>
</dbReference>
<dbReference type="GO" id="GO:0005576">
    <property type="term" value="C:extracellular region"/>
    <property type="evidence" value="ECO:0007669"/>
    <property type="project" value="UniProtKB-SubCell"/>
</dbReference>
<dbReference type="GO" id="GO:0045121">
    <property type="term" value="C:membrane raft"/>
    <property type="evidence" value="ECO:0007669"/>
    <property type="project" value="UniProtKB-SubCell"/>
</dbReference>
<dbReference type="GO" id="GO:0043204">
    <property type="term" value="C:perikaryon"/>
    <property type="evidence" value="ECO:0007669"/>
    <property type="project" value="UniProtKB-SubCell"/>
</dbReference>
<dbReference type="GO" id="GO:0005886">
    <property type="term" value="C:plasma membrane"/>
    <property type="evidence" value="ECO:0007669"/>
    <property type="project" value="UniProtKB-SubCell"/>
</dbReference>
<dbReference type="GO" id="GO:0098552">
    <property type="term" value="C:side of membrane"/>
    <property type="evidence" value="ECO:0007669"/>
    <property type="project" value="UniProtKB-KW"/>
</dbReference>
<dbReference type="GO" id="GO:0045202">
    <property type="term" value="C:synapse"/>
    <property type="evidence" value="ECO:0007669"/>
    <property type="project" value="UniProtKB-SubCell"/>
</dbReference>
<dbReference type="GO" id="GO:0030550">
    <property type="term" value="F:acetylcholine receptor inhibitor activity"/>
    <property type="evidence" value="ECO:0007669"/>
    <property type="project" value="Ensembl"/>
</dbReference>
<dbReference type="GO" id="GO:0030548">
    <property type="term" value="F:acetylcholine receptor regulator activity"/>
    <property type="evidence" value="ECO:0000315"/>
    <property type="project" value="UniProtKB"/>
</dbReference>
<dbReference type="GO" id="GO:0097410">
    <property type="term" value="P:hippocampal interneuron differentiation"/>
    <property type="evidence" value="ECO:0000314"/>
    <property type="project" value="MGI"/>
</dbReference>
<dbReference type="GO" id="GO:0007399">
    <property type="term" value="P:nervous system development"/>
    <property type="evidence" value="ECO:0000314"/>
    <property type="project" value="MGI"/>
</dbReference>
<dbReference type="GO" id="GO:0030182">
    <property type="term" value="P:neuron differentiation"/>
    <property type="evidence" value="ECO:0000314"/>
    <property type="project" value="MGI"/>
</dbReference>
<dbReference type="GO" id="GO:0021859">
    <property type="term" value="P:pyramidal neuron differentiation"/>
    <property type="evidence" value="ECO:0000314"/>
    <property type="project" value="MGI"/>
</dbReference>
<dbReference type="GO" id="GO:0048167">
    <property type="term" value="P:regulation of synaptic plasticity"/>
    <property type="evidence" value="ECO:0000314"/>
    <property type="project" value="MGI"/>
</dbReference>
<dbReference type="GO" id="GO:0007601">
    <property type="term" value="P:visual perception"/>
    <property type="evidence" value="ECO:0000314"/>
    <property type="project" value="MGI"/>
</dbReference>
<dbReference type="CDD" id="cd23625">
    <property type="entry name" value="TFP_LU_ECD_LYPD6"/>
    <property type="match status" value="1"/>
</dbReference>
<dbReference type="FunFam" id="2.10.60.10:FF:000004">
    <property type="entry name" value="Ly6/PLAUR domain-containing protein 6"/>
    <property type="match status" value="1"/>
</dbReference>
<dbReference type="Gene3D" id="2.10.60.10">
    <property type="entry name" value="CD59"/>
    <property type="match status" value="1"/>
</dbReference>
<dbReference type="InterPro" id="IPR039457">
    <property type="entry name" value="LYPD6-like"/>
</dbReference>
<dbReference type="InterPro" id="IPR045860">
    <property type="entry name" value="Snake_toxin-like_sf"/>
</dbReference>
<dbReference type="PANTHER" id="PTHR31171">
    <property type="entry name" value="LY6/PLAUR DOMAIN-CONTAINING PROTEIN 6"/>
    <property type="match status" value="1"/>
</dbReference>
<dbReference type="PANTHER" id="PTHR31171:SF0">
    <property type="entry name" value="LY6_PLAUR DOMAIN-CONTAINING PROTEIN 6"/>
    <property type="match status" value="1"/>
</dbReference>
<dbReference type="Pfam" id="PF16975">
    <property type="entry name" value="UPAR_LY6_2"/>
    <property type="match status" value="1"/>
</dbReference>
<dbReference type="SUPFAM" id="SSF57302">
    <property type="entry name" value="Snake toxin-like"/>
    <property type="match status" value="1"/>
</dbReference>
<reference key="1">
    <citation type="journal article" date="2005" name="Science">
        <title>The transcriptional landscape of the mammalian genome.</title>
        <authorList>
            <person name="Carninci P."/>
            <person name="Kasukawa T."/>
            <person name="Katayama S."/>
            <person name="Gough J."/>
            <person name="Frith M.C."/>
            <person name="Maeda N."/>
            <person name="Oyama R."/>
            <person name="Ravasi T."/>
            <person name="Lenhard B."/>
            <person name="Wells C."/>
            <person name="Kodzius R."/>
            <person name="Shimokawa K."/>
            <person name="Bajic V.B."/>
            <person name="Brenner S.E."/>
            <person name="Batalov S."/>
            <person name="Forrest A.R."/>
            <person name="Zavolan M."/>
            <person name="Davis M.J."/>
            <person name="Wilming L.G."/>
            <person name="Aidinis V."/>
            <person name="Allen J.E."/>
            <person name="Ambesi-Impiombato A."/>
            <person name="Apweiler R."/>
            <person name="Aturaliya R.N."/>
            <person name="Bailey T.L."/>
            <person name="Bansal M."/>
            <person name="Baxter L."/>
            <person name="Beisel K.W."/>
            <person name="Bersano T."/>
            <person name="Bono H."/>
            <person name="Chalk A.M."/>
            <person name="Chiu K.P."/>
            <person name="Choudhary V."/>
            <person name="Christoffels A."/>
            <person name="Clutterbuck D.R."/>
            <person name="Crowe M.L."/>
            <person name="Dalla E."/>
            <person name="Dalrymple B.P."/>
            <person name="de Bono B."/>
            <person name="Della Gatta G."/>
            <person name="di Bernardo D."/>
            <person name="Down T."/>
            <person name="Engstrom P."/>
            <person name="Fagiolini M."/>
            <person name="Faulkner G."/>
            <person name="Fletcher C.F."/>
            <person name="Fukushima T."/>
            <person name="Furuno M."/>
            <person name="Futaki S."/>
            <person name="Gariboldi M."/>
            <person name="Georgii-Hemming P."/>
            <person name="Gingeras T.R."/>
            <person name="Gojobori T."/>
            <person name="Green R.E."/>
            <person name="Gustincich S."/>
            <person name="Harbers M."/>
            <person name="Hayashi Y."/>
            <person name="Hensch T.K."/>
            <person name="Hirokawa N."/>
            <person name="Hill D."/>
            <person name="Huminiecki L."/>
            <person name="Iacono M."/>
            <person name="Ikeo K."/>
            <person name="Iwama A."/>
            <person name="Ishikawa T."/>
            <person name="Jakt M."/>
            <person name="Kanapin A."/>
            <person name="Katoh M."/>
            <person name="Kawasawa Y."/>
            <person name="Kelso J."/>
            <person name="Kitamura H."/>
            <person name="Kitano H."/>
            <person name="Kollias G."/>
            <person name="Krishnan S.P."/>
            <person name="Kruger A."/>
            <person name="Kummerfeld S.K."/>
            <person name="Kurochkin I.V."/>
            <person name="Lareau L.F."/>
            <person name="Lazarevic D."/>
            <person name="Lipovich L."/>
            <person name="Liu J."/>
            <person name="Liuni S."/>
            <person name="McWilliam S."/>
            <person name="Madan Babu M."/>
            <person name="Madera M."/>
            <person name="Marchionni L."/>
            <person name="Matsuda H."/>
            <person name="Matsuzawa S."/>
            <person name="Miki H."/>
            <person name="Mignone F."/>
            <person name="Miyake S."/>
            <person name="Morris K."/>
            <person name="Mottagui-Tabar S."/>
            <person name="Mulder N."/>
            <person name="Nakano N."/>
            <person name="Nakauchi H."/>
            <person name="Ng P."/>
            <person name="Nilsson R."/>
            <person name="Nishiguchi S."/>
            <person name="Nishikawa S."/>
            <person name="Nori F."/>
            <person name="Ohara O."/>
            <person name="Okazaki Y."/>
            <person name="Orlando V."/>
            <person name="Pang K.C."/>
            <person name="Pavan W.J."/>
            <person name="Pavesi G."/>
            <person name="Pesole G."/>
            <person name="Petrovsky N."/>
            <person name="Piazza S."/>
            <person name="Reed J."/>
            <person name="Reid J.F."/>
            <person name="Ring B.Z."/>
            <person name="Ringwald M."/>
            <person name="Rost B."/>
            <person name="Ruan Y."/>
            <person name="Salzberg S.L."/>
            <person name="Sandelin A."/>
            <person name="Schneider C."/>
            <person name="Schoenbach C."/>
            <person name="Sekiguchi K."/>
            <person name="Semple C.A."/>
            <person name="Seno S."/>
            <person name="Sessa L."/>
            <person name="Sheng Y."/>
            <person name="Shibata Y."/>
            <person name="Shimada H."/>
            <person name="Shimada K."/>
            <person name="Silva D."/>
            <person name="Sinclair B."/>
            <person name="Sperling S."/>
            <person name="Stupka E."/>
            <person name="Sugiura K."/>
            <person name="Sultana R."/>
            <person name="Takenaka Y."/>
            <person name="Taki K."/>
            <person name="Tammoja K."/>
            <person name="Tan S.L."/>
            <person name="Tang S."/>
            <person name="Taylor M.S."/>
            <person name="Tegner J."/>
            <person name="Teichmann S.A."/>
            <person name="Ueda H.R."/>
            <person name="van Nimwegen E."/>
            <person name="Verardo R."/>
            <person name="Wei C.L."/>
            <person name="Yagi K."/>
            <person name="Yamanishi H."/>
            <person name="Zabarovsky E."/>
            <person name="Zhu S."/>
            <person name="Zimmer A."/>
            <person name="Hide W."/>
            <person name="Bult C."/>
            <person name="Grimmond S.M."/>
            <person name="Teasdale R.D."/>
            <person name="Liu E.T."/>
            <person name="Brusic V."/>
            <person name="Quackenbush J."/>
            <person name="Wahlestedt C."/>
            <person name="Mattick J.S."/>
            <person name="Hume D.A."/>
            <person name="Kai C."/>
            <person name="Sasaki D."/>
            <person name="Tomaru Y."/>
            <person name="Fukuda S."/>
            <person name="Kanamori-Katayama M."/>
            <person name="Suzuki M."/>
            <person name="Aoki J."/>
            <person name="Arakawa T."/>
            <person name="Iida J."/>
            <person name="Imamura K."/>
            <person name="Itoh M."/>
            <person name="Kato T."/>
            <person name="Kawaji H."/>
            <person name="Kawagashira N."/>
            <person name="Kawashima T."/>
            <person name="Kojima M."/>
            <person name="Kondo S."/>
            <person name="Konno H."/>
            <person name="Nakano K."/>
            <person name="Ninomiya N."/>
            <person name="Nishio T."/>
            <person name="Okada M."/>
            <person name="Plessy C."/>
            <person name="Shibata K."/>
            <person name="Shiraki T."/>
            <person name="Suzuki S."/>
            <person name="Tagami M."/>
            <person name="Waki K."/>
            <person name="Watahiki A."/>
            <person name="Okamura-Oho Y."/>
            <person name="Suzuki H."/>
            <person name="Kawai J."/>
            <person name="Hayashizaki Y."/>
        </authorList>
    </citation>
    <scope>NUCLEOTIDE SEQUENCE [LARGE SCALE MRNA]</scope>
    <source>
        <strain>C57BL/6J</strain>
        <tissue>Eye</tissue>
    </source>
</reference>
<reference key="2">
    <citation type="journal article" date="2004" name="Genome Res.">
        <title>The status, quality, and expansion of the NIH full-length cDNA project: the Mammalian Gene Collection (MGC).</title>
        <authorList>
            <consortium name="The MGC Project Team"/>
        </authorList>
    </citation>
    <scope>NUCLEOTIDE SEQUENCE [LARGE SCALE MRNA]</scope>
    <source>
        <strain>C57BL/6J</strain>
        <tissue>Eye</tissue>
    </source>
</reference>
<reference key="3">
    <citation type="journal article" date="2009" name="Eur. Neuropsychopharmacol.">
        <title>Modulation of the Ca2+ conductance of nicotinic acetylcholine receptors by Lypd6.</title>
        <authorList>
            <person name="Darvas M."/>
            <person name="Morsch M."/>
            <person name="Racz I."/>
            <person name="Ahmadi S."/>
            <person name="Swandulla D."/>
            <person name="Zimmer A."/>
        </authorList>
    </citation>
    <scope>FUNCTION</scope>
    <scope>TISSUE SPECIFICITY</scope>
</reference>
<reference key="4">
    <citation type="journal article" date="2015" name="Neurobiol. Aging">
        <title>Prostate stem cell antigen interacts with nicotinic acetylcholine receptors and is affected in Alzheimer's disease.</title>
        <authorList>
            <person name="Jensen M.M."/>
            <person name="Arvaniti M."/>
            <person name="Mikkelsen J.D."/>
            <person name="Michalski D."/>
            <person name="Pinborg L.H."/>
            <person name="Haertig W."/>
            <person name="Thomsen M.S."/>
        </authorList>
    </citation>
    <scope>TISSUE SPECIFICITY</scope>
</reference>
<name>LYPD6_MOUSE</name>
<evidence type="ECO:0000250" key="1">
    <source>
        <dbReference type="UniProtKB" id="D3ZTT2"/>
    </source>
</evidence>
<evidence type="ECO:0000250" key="2">
    <source>
        <dbReference type="UniProtKB" id="Q66IA6"/>
    </source>
</evidence>
<evidence type="ECO:0000250" key="3">
    <source>
        <dbReference type="UniProtKB" id="Q86Y78"/>
    </source>
</evidence>
<evidence type="ECO:0000255" key="4"/>
<evidence type="ECO:0000255" key="5">
    <source>
        <dbReference type="PROSITE-ProRule" id="PRU00498"/>
    </source>
</evidence>
<evidence type="ECO:0000269" key="6">
    <source>
    </source>
</evidence>
<evidence type="ECO:0000269" key="7">
    <source>
    </source>
</evidence>
<organism>
    <name type="scientific">Mus musculus</name>
    <name type="common">Mouse</name>
    <dbReference type="NCBI Taxonomy" id="10090"/>
    <lineage>
        <taxon>Eukaryota</taxon>
        <taxon>Metazoa</taxon>
        <taxon>Chordata</taxon>
        <taxon>Craniata</taxon>
        <taxon>Vertebrata</taxon>
        <taxon>Euteleostomi</taxon>
        <taxon>Mammalia</taxon>
        <taxon>Eutheria</taxon>
        <taxon>Euarchontoglires</taxon>
        <taxon>Glires</taxon>
        <taxon>Rodentia</taxon>
        <taxon>Myomorpha</taxon>
        <taxon>Muroidea</taxon>
        <taxon>Muridae</taxon>
        <taxon>Murinae</taxon>
        <taxon>Mus</taxon>
        <taxon>Mus</taxon>
    </lineage>
</organism>
<keyword id="KW-1003">Cell membrane</keyword>
<keyword id="KW-0966">Cell projection</keyword>
<keyword id="KW-0963">Cytoplasm</keyword>
<keyword id="KW-1015">Disulfide bond</keyword>
<keyword id="KW-0325">Glycoprotein</keyword>
<keyword id="KW-0336">GPI-anchor</keyword>
<keyword id="KW-0449">Lipoprotein</keyword>
<keyword id="KW-0472">Membrane</keyword>
<keyword id="KW-1185">Reference proteome</keyword>
<keyword id="KW-0964">Secreted</keyword>
<keyword id="KW-0732">Signal</keyword>
<keyword id="KW-0770">Synapse</keyword>
<keyword id="KW-0771">Synaptosome</keyword>
<proteinExistence type="evidence at protein level"/>
<accession>Q8BPP5</accession>
<comment type="function">
    <text evidence="2 3 6">Acts as a modulator of nicotinic acetylcholine receptors (nAChRs) function in the brain (PubMed:19403274). Inhibits nicotine-induced Ca(2+) influx through nAChRs (By similarity). In vitro, specifically inhibits alpha-3:beta-4 and alpha-7 nAChR currents in an allosteric manner (By similarity). Acts as a positive regulator of Wnt/beta-catenin signaling (By similarity).</text>
</comment>
<comment type="subunit">
    <text evidence="3">Interacts with nicotinic acetylcholine receptors (nAChRs) including CHRNA3, CHRNA4, CHRNA5, CHRNA6, CHRNA7, CHRNB2 and CHRNB4 (By similarity). Interacts (via NxI motif) with LRP6 (By similarity).</text>
</comment>
<comment type="subcellular location">
    <subcellularLocation>
        <location evidence="3">Secreted</location>
    </subcellularLocation>
    <subcellularLocation>
        <location evidence="3">Cytoplasm</location>
    </subcellularLocation>
    <subcellularLocation>
        <location evidence="4">Cell membrane</location>
        <topology evidence="4">Lipid-anchor</topology>
        <topology evidence="4">GPI-anchor</topology>
    </subcellularLocation>
    <subcellularLocation>
        <location evidence="1">Synapse</location>
        <location evidence="1">Synaptosome</location>
    </subcellularLocation>
    <subcellularLocation>
        <location evidence="2">Membrane raft</location>
    </subcellularLocation>
    <subcellularLocation>
        <location evidence="1">Cell projection</location>
        <location evidence="1">Dendrite</location>
    </subcellularLocation>
    <subcellularLocation>
        <location evidence="1">Perikaryon</location>
    </subcellularLocation>
    <text evidence="1">Colocalizes with alpha-3:beta-4- and alpha-7- nicotinic acetylcholine receptors (nAChRs) in the primary cortex and hippocampus.</text>
</comment>
<comment type="tissue specificity">
    <text evidence="6 7">Detected in the frontal cortex and hippocampus (at protein level) (PubMed:25680266). Highly expressed in the brain and spinal cord, as well as dorsal root and trigeminal ganglia (PubMed:19403274).</text>
</comment>
<comment type="domain">
    <text evidence="3">The UPAR/Ly6 domain is sufficient for inhibiting alpha-3:beta-4 and alpha-7-dependent nAChR currents.</text>
</comment>
<gene>
    <name type="primary">Lypd6</name>
</gene>